<reference key="1">
    <citation type="journal article" date="2002" name="J. Immunol.">
        <title>Identification of multiple novel epididymis-specific beta-defensin isoforms in humans and mice.</title>
        <authorList>
            <person name="Yamaguchi Y."/>
            <person name="Nagase T."/>
            <person name="Makita R."/>
            <person name="Fukuhara S."/>
            <person name="Tomita T."/>
            <person name="Tominaga T."/>
            <person name="Kurihara H."/>
            <person name="Ouchi Y."/>
        </authorList>
    </citation>
    <scope>NUCLEOTIDE SEQUENCE [MRNA]</scope>
    <source>
        <tissue>Epididymis</tissue>
    </source>
</reference>
<reference key="2">
    <citation type="journal article" date="2004" name="Genome Res.">
        <title>The status, quality, and expansion of the NIH full-length cDNA project: the Mammalian Gene Collection (MGC).</title>
        <authorList>
            <consortium name="The MGC Project Team"/>
        </authorList>
    </citation>
    <scope>NUCLEOTIDE SEQUENCE [LARGE SCALE MRNA]</scope>
</reference>
<reference key="3">
    <citation type="journal article" date="2003" name="Genome Biol.">
        <title>Duplication and selection in the evolution of primate beta-defensin genes.</title>
        <authorList>
            <person name="Semple C.A.M."/>
            <person name="Rolfe M."/>
            <person name="Dorin J.R."/>
        </authorList>
    </citation>
    <scope>NUCLEOTIDE SEQUENCE [MRNA] OF 1-77</scope>
</reference>
<organism>
    <name type="scientific">Homo sapiens</name>
    <name type="common">Human</name>
    <dbReference type="NCBI Taxonomy" id="9606"/>
    <lineage>
        <taxon>Eukaryota</taxon>
        <taxon>Metazoa</taxon>
        <taxon>Chordata</taxon>
        <taxon>Craniata</taxon>
        <taxon>Vertebrata</taxon>
        <taxon>Euteleostomi</taxon>
        <taxon>Mammalia</taxon>
        <taxon>Eutheria</taxon>
        <taxon>Euarchontoglires</taxon>
        <taxon>Primates</taxon>
        <taxon>Haplorrhini</taxon>
        <taxon>Catarrhini</taxon>
        <taxon>Hominidae</taxon>
        <taxon>Homo</taxon>
    </lineage>
</organism>
<feature type="signal peptide" evidence="2">
    <location>
        <begin position="1"/>
        <end position="27"/>
    </location>
</feature>
<feature type="peptide" id="PRO_0000006975" description="Beta-defensin 105">
    <location>
        <begin position="28"/>
        <end position="78"/>
    </location>
</feature>
<feature type="disulfide bond" evidence="1">
    <location>
        <begin position="43"/>
        <end position="74"/>
    </location>
</feature>
<feature type="disulfide bond" evidence="1">
    <location>
        <begin position="53"/>
        <end position="67"/>
    </location>
</feature>
<feature type="disulfide bond" evidence="1">
    <location>
        <begin position="57"/>
        <end position="73"/>
    </location>
</feature>
<gene>
    <name type="primary">DEFB105A</name>
    <name type="synonym">BD5</name>
    <name type="synonym">DEFB105</name>
    <name type="synonym">DEFB5</name>
</gene>
<gene>
    <name type="primary">DEFB105B</name>
</gene>
<comment type="function">
    <text evidence="3">Has antibacterial activity.</text>
</comment>
<comment type="subcellular location">
    <subcellularLocation>
        <location>Secreted</location>
    </subcellularLocation>
</comment>
<comment type="tissue specificity">
    <text>Specifically expressed in testis.</text>
</comment>
<comment type="similarity">
    <text evidence="3">Belongs to the beta-defensin family.</text>
</comment>
<accession>Q8NG35</accession>
<accession>A1A581</accession>
<accession>Q8IZN8</accession>
<evidence type="ECO:0000250" key="1"/>
<evidence type="ECO:0000255" key="2"/>
<evidence type="ECO:0000305" key="3"/>
<keyword id="KW-0044">Antibiotic</keyword>
<keyword id="KW-0929">Antimicrobial</keyword>
<keyword id="KW-0211">Defensin</keyword>
<keyword id="KW-1015">Disulfide bond</keyword>
<keyword id="KW-1267">Proteomics identification</keyword>
<keyword id="KW-1185">Reference proteome</keyword>
<keyword id="KW-0964">Secreted</keyword>
<keyword id="KW-0732">Signal</keyword>
<dbReference type="EMBL" id="AB089180">
    <property type="protein sequence ID" value="BAC10630.1"/>
    <property type="molecule type" value="mRNA"/>
</dbReference>
<dbReference type="EMBL" id="BC128437">
    <property type="protein sequence ID" value="AAI28438.1"/>
    <property type="molecule type" value="mRNA"/>
</dbReference>
<dbReference type="EMBL" id="BC128438">
    <property type="protein sequence ID" value="AAI28439.1"/>
    <property type="molecule type" value="mRNA"/>
</dbReference>
<dbReference type="EMBL" id="AF540977">
    <property type="protein sequence ID" value="AAN33113.1"/>
    <property type="molecule type" value="mRNA"/>
</dbReference>
<dbReference type="CCDS" id="CCDS34814.1"/>
<dbReference type="CCDS" id="CCDS34832.1"/>
<dbReference type="RefSeq" id="NP_001035793.1">
    <property type="nucleotide sequence ID" value="NM_001040703.2"/>
</dbReference>
<dbReference type="RefSeq" id="NP_689463.1">
    <property type="nucleotide sequence ID" value="NM_152250.3"/>
</dbReference>
<dbReference type="SMR" id="Q8NG35"/>
<dbReference type="BioGRID" id="128833">
    <property type="interactions" value="1"/>
</dbReference>
<dbReference type="BioGRID" id="139060">
    <property type="interactions" value="182"/>
</dbReference>
<dbReference type="FunCoup" id="Q8NG35">
    <property type="interactions" value="1"/>
</dbReference>
<dbReference type="STRING" id="9606.ENSP00000334330"/>
<dbReference type="BioMuta" id="DEFB105A"/>
<dbReference type="DMDM" id="37077353"/>
<dbReference type="MassIVE" id="Q8NG35"/>
<dbReference type="PaxDb" id="9606-ENSP00000334330"/>
<dbReference type="PeptideAtlas" id="Q8NG35"/>
<dbReference type="ProteomicsDB" id="73417"/>
<dbReference type="Antibodypedia" id="56705">
    <property type="antibodies" value="12 antibodies from 5 providers"/>
</dbReference>
<dbReference type="Antibodypedia" id="68998">
    <property type="antibodies" value="12 antibodies from 3 providers"/>
</dbReference>
<dbReference type="DNASU" id="245908"/>
<dbReference type="Ensembl" id="ENST00000334773.7">
    <property type="protein sequence ID" value="ENSP00000334330.6"/>
    <property type="gene ID" value="ENSG00000186562.8"/>
</dbReference>
<dbReference type="Ensembl" id="ENST00000335510.7">
    <property type="protein sequence ID" value="ENSP00000335281.6"/>
    <property type="gene ID" value="ENSG00000186599.8"/>
</dbReference>
<dbReference type="Ensembl" id="ENST00000611610.1">
    <property type="protein sequence ID" value="ENSP00000482176.1"/>
    <property type="gene ID" value="ENSG00000274729.1"/>
</dbReference>
<dbReference type="Ensembl" id="ENST00000644948.2">
    <property type="protein sequence ID" value="ENSP00000496561.1"/>
    <property type="gene ID" value="ENSG00000285015.2"/>
</dbReference>
<dbReference type="Ensembl" id="ENST00000646529.3">
    <property type="protein sequence ID" value="ENSP00000495658.1"/>
    <property type="gene ID" value="ENSG00000285411.3"/>
</dbReference>
<dbReference type="GeneID" id="245908"/>
<dbReference type="GeneID" id="504180"/>
<dbReference type="KEGG" id="hsa:245908"/>
<dbReference type="KEGG" id="hsa:504180"/>
<dbReference type="MANE-Select" id="ENST00000334773.7">
    <property type="protein sequence ID" value="ENSP00000334330.6"/>
    <property type="RefSeq nucleotide sequence ID" value="NM_152250.3"/>
    <property type="RefSeq protein sequence ID" value="NP_689463.1"/>
</dbReference>
<dbReference type="MANE-Select" id="ENST00000335510.7">
    <property type="protein sequence ID" value="ENSP00000335281.6"/>
    <property type="RefSeq nucleotide sequence ID" value="NM_001040703.3"/>
    <property type="RefSeq protein sequence ID" value="NP_001035793.1"/>
</dbReference>
<dbReference type="UCSC" id="uc011kwp.3">
    <property type="organism name" value="human"/>
</dbReference>
<dbReference type="AGR" id="HGNC:18087"/>
<dbReference type="AGR" id="HGNC:29930"/>
<dbReference type="CTD" id="245908"/>
<dbReference type="CTD" id="504180"/>
<dbReference type="DisGeNET" id="245908"/>
<dbReference type="DisGeNET" id="504180"/>
<dbReference type="GeneCards" id="DEFB105A"/>
<dbReference type="GeneCards" id="DEFB105B"/>
<dbReference type="HGNC" id="HGNC:18087">
    <property type="gene designation" value="DEFB105A"/>
</dbReference>
<dbReference type="HGNC" id="HGNC:29930">
    <property type="gene designation" value="DEFB105B"/>
</dbReference>
<dbReference type="HPA" id="ENSG00000186562">
    <property type="expression patterns" value="Tissue enriched (epididymis)"/>
</dbReference>
<dbReference type="HPA" id="ENSG00000186599">
    <property type="expression patterns" value="Tissue enriched (epididymis)"/>
</dbReference>
<dbReference type="neXtProt" id="NX_Q8NG35"/>
<dbReference type="OpenTargets" id="ENSG00000186599"/>
<dbReference type="PharmGKB" id="PA142671991"/>
<dbReference type="VEuPathDB" id="HostDB:ENSG00000186562"/>
<dbReference type="VEuPathDB" id="HostDB:ENSG00000186599"/>
<dbReference type="eggNOG" id="ENOG502TE24">
    <property type="taxonomic scope" value="Eukaryota"/>
</dbReference>
<dbReference type="GeneTree" id="ENSGT00390000002317"/>
<dbReference type="HOGENOM" id="CLU_197691_0_0_1"/>
<dbReference type="InParanoid" id="Q8NG35"/>
<dbReference type="OMA" id="CRRMCLE"/>
<dbReference type="OrthoDB" id="9511204at2759"/>
<dbReference type="PAN-GO" id="Q8NG35">
    <property type="GO annotations" value="0 GO annotations based on evolutionary models"/>
</dbReference>
<dbReference type="PhylomeDB" id="Q8NG35"/>
<dbReference type="PathwayCommons" id="Q8NG35"/>
<dbReference type="Reactome" id="R-HSA-1461957">
    <property type="pathway name" value="Beta defensins"/>
</dbReference>
<dbReference type="Reactome" id="R-HSA-1461973">
    <property type="pathway name" value="Defensins"/>
</dbReference>
<dbReference type="BioGRID-ORCS" id="245908">
    <property type="hits" value="16 hits in 958 CRISPR screens"/>
</dbReference>
<dbReference type="BioGRID-ORCS" id="504180">
    <property type="hits" value="10 hits in 656 CRISPR screens"/>
</dbReference>
<dbReference type="GeneWiki" id="DEFB105A"/>
<dbReference type="Pharos" id="Q8NG35">
    <property type="development level" value="Tbio"/>
</dbReference>
<dbReference type="PRO" id="PR:Q8NG35"/>
<dbReference type="Proteomes" id="UP000005640">
    <property type="component" value="Chromosome 8"/>
</dbReference>
<dbReference type="RNAct" id="Q8NG35">
    <property type="molecule type" value="protein"/>
</dbReference>
<dbReference type="Bgee" id="ENSG00000186562">
    <property type="expression patterns" value="Expressed in muscle tissue and 32 other cell types or tissues"/>
</dbReference>
<dbReference type="ExpressionAtlas" id="Q8NG35">
    <property type="expression patterns" value="baseline"/>
</dbReference>
<dbReference type="GO" id="GO:0005576">
    <property type="term" value="C:extracellular region"/>
    <property type="evidence" value="ECO:0007669"/>
    <property type="project" value="UniProtKB-SubCell"/>
</dbReference>
<dbReference type="GO" id="GO:0042742">
    <property type="term" value="P:defense response to bacterium"/>
    <property type="evidence" value="ECO:0007669"/>
    <property type="project" value="UniProtKB-KW"/>
</dbReference>
<dbReference type="GO" id="GO:0045087">
    <property type="term" value="P:innate immune response"/>
    <property type="evidence" value="ECO:0007669"/>
    <property type="project" value="InterPro"/>
</dbReference>
<dbReference type="InterPro" id="IPR025933">
    <property type="entry name" value="Beta_defensin_dom"/>
</dbReference>
<dbReference type="Pfam" id="PF13841">
    <property type="entry name" value="Defensin_beta_2"/>
    <property type="match status" value="1"/>
</dbReference>
<proteinExistence type="evidence at protein level"/>
<protein>
    <recommendedName>
        <fullName>Beta-defensin 105</fullName>
    </recommendedName>
    <alternativeName>
        <fullName>Beta-defensin 5</fullName>
        <shortName>BD-5</shortName>
        <shortName>DEFB-5</shortName>
    </alternativeName>
    <alternativeName>
        <fullName>Defensin, beta 105</fullName>
    </alternativeName>
</protein>
<name>D105A_HUMAN</name>
<sequence>MALIRKTFYFLFAMFFILVQLPSGCQAGLDFSQPFPSGEFAVCESCKLGRGKCRKECLENEKPDGNCRLNFLCCRQRI</sequence>